<protein>
    <recommendedName>
        <fullName>S-arrestin</fullName>
    </recommendedName>
    <alternativeName>
        <fullName>48 kDa protein</fullName>
    </alternativeName>
    <alternativeName>
        <fullName evidence="18">Retinal S-antigen</fullName>
        <shortName>S-AG</shortName>
    </alternativeName>
    <alternativeName>
        <fullName>Rod photoreceptor arrestin</fullName>
    </alternativeName>
</protein>
<keyword id="KW-0966">Cell projection</keyword>
<keyword id="KW-1014">Congenital stationary night blindness</keyword>
<keyword id="KW-0225">Disease variant</keyword>
<keyword id="KW-0472">Membrane</keyword>
<keyword id="KW-0597">Phosphoprotein</keyword>
<keyword id="KW-1267">Proteomics identification</keyword>
<keyword id="KW-1185">Reference proteome</keyword>
<keyword id="KW-0682">Retinitis pigmentosa</keyword>
<reference key="1">
    <citation type="journal article" date="1988" name="FEBS Lett.">
        <title>The sequence of human retinal S-antigen reveals similarities with alpha-transducin.</title>
        <authorList>
            <person name="Yamaki K."/>
            <person name="Tsuda M."/>
            <person name="Shinohara T."/>
        </authorList>
    </citation>
    <scope>NUCLEOTIDE SEQUENCE [MRNA]</scope>
    <scope>VARIANT ALA-403</scope>
    <source>
        <tissue>Retina</tissue>
    </source>
</reference>
<reference key="2">
    <citation type="journal article" date="1988" name="FEBS Lett.">
        <authorList>
            <person name="Yamaki K."/>
            <person name="Tsuda M."/>
            <person name="Shinohara T."/>
        </authorList>
    </citation>
    <scope>ERRATUM OF PUBMED:3164688</scope>
</reference>
<reference key="3">
    <citation type="journal article" date="1997" name="Nat. Genet.">
        <title>Defects in the rhodopsin kinase gene in the Oguchi form of stationary night blindness.</title>
        <authorList>
            <person name="Yamamoto S."/>
            <person name="Sippel K.C."/>
            <person name="Berson E.L."/>
            <person name="Dryja T.P."/>
        </authorList>
    </citation>
    <scope>NUCLEOTIDE SEQUENCE [GENOMIC DNA]</scope>
    <scope>VARIANT ALA-403</scope>
</reference>
<reference key="4">
    <citation type="journal article" date="2005" name="Nature">
        <title>Generation and annotation of the DNA sequences of human chromosomes 2 and 4.</title>
        <authorList>
            <person name="Hillier L.W."/>
            <person name="Graves T.A."/>
            <person name="Fulton R.S."/>
            <person name="Fulton L.A."/>
            <person name="Pepin K.H."/>
            <person name="Minx P."/>
            <person name="Wagner-McPherson C."/>
            <person name="Layman D."/>
            <person name="Wylie K."/>
            <person name="Sekhon M."/>
            <person name="Becker M.C."/>
            <person name="Fewell G.A."/>
            <person name="Delehaunty K.D."/>
            <person name="Miner T.L."/>
            <person name="Nash W.E."/>
            <person name="Kremitzki C."/>
            <person name="Oddy L."/>
            <person name="Du H."/>
            <person name="Sun H."/>
            <person name="Bradshaw-Cordum H."/>
            <person name="Ali J."/>
            <person name="Carter J."/>
            <person name="Cordes M."/>
            <person name="Harris A."/>
            <person name="Isak A."/>
            <person name="van Brunt A."/>
            <person name="Nguyen C."/>
            <person name="Du F."/>
            <person name="Courtney L."/>
            <person name="Kalicki J."/>
            <person name="Ozersky P."/>
            <person name="Abbott S."/>
            <person name="Armstrong J."/>
            <person name="Belter E.A."/>
            <person name="Caruso L."/>
            <person name="Cedroni M."/>
            <person name="Cotton M."/>
            <person name="Davidson T."/>
            <person name="Desai A."/>
            <person name="Elliott G."/>
            <person name="Erb T."/>
            <person name="Fronick C."/>
            <person name="Gaige T."/>
            <person name="Haakenson W."/>
            <person name="Haglund K."/>
            <person name="Holmes A."/>
            <person name="Harkins R."/>
            <person name="Kim K."/>
            <person name="Kruchowski S.S."/>
            <person name="Strong C.M."/>
            <person name="Grewal N."/>
            <person name="Goyea E."/>
            <person name="Hou S."/>
            <person name="Levy A."/>
            <person name="Martinka S."/>
            <person name="Mead K."/>
            <person name="McLellan M.D."/>
            <person name="Meyer R."/>
            <person name="Randall-Maher J."/>
            <person name="Tomlinson C."/>
            <person name="Dauphin-Kohlberg S."/>
            <person name="Kozlowicz-Reilly A."/>
            <person name="Shah N."/>
            <person name="Swearengen-Shahid S."/>
            <person name="Snider J."/>
            <person name="Strong J.T."/>
            <person name="Thompson J."/>
            <person name="Yoakum M."/>
            <person name="Leonard S."/>
            <person name="Pearman C."/>
            <person name="Trani L."/>
            <person name="Radionenko M."/>
            <person name="Waligorski J.E."/>
            <person name="Wang C."/>
            <person name="Rock S.M."/>
            <person name="Tin-Wollam A.-M."/>
            <person name="Maupin R."/>
            <person name="Latreille P."/>
            <person name="Wendl M.C."/>
            <person name="Yang S.-P."/>
            <person name="Pohl C."/>
            <person name="Wallis J.W."/>
            <person name="Spieth J."/>
            <person name="Bieri T.A."/>
            <person name="Berkowicz N."/>
            <person name="Nelson J.O."/>
            <person name="Osborne J."/>
            <person name="Ding L."/>
            <person name="Meyer R."/>
            <person name="Sabo A."/>
            <person name="Shotland Y."/>
            <person name="Sinha P."/>
            <person name="Wohldmann P.E."/>
            <person name="Cook L.L."/>
            <person name="Hickenbotham M.T."/>
            <person name="Eldred J."/>
            <person name="Williams D."/>
            <person name="Jones T.A."/>
            <person name="She X."/>
            <person name="Ciccarelli F.D."/>
            <person name="Izaurralde E."/>
            <person name="Taylor J."/>
            <person name="Schmutz J."/>
            <person name="Myers R.M."/>
            <person name="Cox D.R."/>
            <person name="Huang X."/>
            <person name="McPherson J.D."/>
            <person name="Mardis E.R."/>
            <person name="Clifton S.W."/>
            <person name="Warren W.C."/>
            <person name="Chinwalla A.T."/>
            <person name="Eddy S.R."/>
            <person name="Marra M.A."/>
            <person name="Ovcharenko I."/>
            <person name="Furey T.S."/>
            <person name="Miller W."/>
            <person name="Eichler E.E."/>
            <person name="Bork P."/>
            <person name="Suyama M."/>
            <person name="Torrents D."/>
            <person name="Waterston R.H."/>
            <person name="Wilson R.K."/>
        </authorList>
    </citation>
    <scope>NUCLEOTIDE SEQUENCE [LARGE SCALE GENOMIC DNA]</scope>
</reference>
<reference key="5">
    <citation type="journal article" date="2007" name="BMC Genomics">
        <title>Mapping of transcription start sites of human retina expressed genes.</title>
        <authorList>
            <person name="Roni V."/>
            <person name="Carpio R."/>
            <person name="Wissinger B."/>
        </authorList>
    </citation>
    <scope>NUCLEOTIDE SEQUENCE [LARGE SCALE MRNA] OF 1-133</scope>
    <source>
        <tissue>Retina</tissue>
    </source>
</reference>
<reference key="6">
    <citation type="journal article" date="1986" name="Exp. Eye Res.">
        <title>Ultrastructural localization of retinal S antigen in the human retina.</title>
        <authorList>
            <person name="McKechnie N.M."/>
            <person name="Al-Mahdawi S."/>
            <person name="Dutton G."/>
            <person name="Forrester J.V."/>
        </authorList>
    </citation>
    <scope>TISSUE SPECIFICITY</scope>
    <scope>SUBCELLULAR LOCATION</scope>
</reference>
<reference key="7">
    <citation type="journal article" date="1995" name="Nat. Genet.">
        <title>A homozygous 1-base pair deletion in the arrestin gene is a frequent cause of Oguchi disease in Japanese.</title>
        <authorList>
            <person name="Fuchs S."/>
            <person name="Nakazawa M."/>
            <person name="Maw M."/>
            <person name="Tamai M."/>
            <person name="Oguchi Y."/>
            <person name="Gal A."/>
        </authorList>
    </citation>
    <scope>INVOLVEMENT IN CSNBO1</scope>
    <scope>VARIANT VAL-76</scope>
</reference>
<reference key="8">
    <citation type="journal article" date="1998" name="Arch. Ophthalmol.">
        <title>Arrestin gene mutations in autosomal recessive retinitis pigmentosa.</title>
        <authorList>
            <person name="Nakazawa M."/>
            <person name="Wada Y."/>
            <person name="Tamai M."/>
        </authorList>
    </citation>
    <scope>INVOLVEMENT IN RP47</scope>
    <scope>FUNCTION</scope>
</reference>
<reference key="9">
    <citation type="journal article" date="2011" name="Biochemistry">
        <title>Robust self-association is a common feature of mammalian visual arrestin-1.</title>
        <authorList>
            <person name="Kim M."/>
            <person name="Hanson S.M."/>
            <person name="Vishnivetskiy S.A."/>
            <person name="Song X."/>
            <person name="Cleghorn W.M."/>
            <person name="Hubbell W.L."/>
            <person name="Gurevich V.V."/>
        </authorList>
    </citation>
    <scope>SUBUNIT</scope>
</reference>
<reference key="10">
    <citation type="journal article" date="2015" name="Nature">
        <title>Crystal structure of rhodopsin bound to arrestin by femtosecond X-ray laser.</title>
        <authorList>
            <person name="Kang Y."/>
            <person name="Zhou X.E."/>
            <person name="Gao X."/>
            <person name="He Y."/>
            <person name="Liu W."/>
            <person name="Ishchenko A."/>
            <person name="Barty A."/>
            <person name="White T.A."/>
            <person name="Yefanov O."/>
            <person name="Han G.W."/>
            <person name="Xu Q."/>
            <person name="de Waal P.W."/>
            <person name="Ke J."/>
            <person name="Tan M.H."/>
            <person name="Zhang C."/>
            <person name="Moeller A."/>
            <person name="West G.M."/>
            <person name="Pascal B.D."/>
            <person name="Van Eps N."/>
            <person name="Caro L.N."/>
            <person name="Vishnivetskiy S.A."/>
            <person name="Lee R.J."/>
            <person name="Suino-Powell K.M."/>
            <person name="Gu X."/>
            <person name="Pal K."/>
            <person name="Ma J."/>
            <person name="Zhi X."/>
            <person name="Boutet S."/>
            <person name="Williams G.J."/>
            <person name="Messerschmidt M."/>
            <person name="Gati C."/>
            <person name="Zatsepin N.A."/>
            <person name="Wang D."/>
            <person name="James D."/>
            <person name="Basu S."/>
            <person name="Roy-Chowdhury S."/>
            <person name="Conrad C.E."/>
            <person name="Coe J."/>
            <person name="Liu H."/>
            <person name="Lisova S."/>
            <person name="Kupitz C."/>
            <person name="Grotjohann I."/>
            <person name="Fromme R."/>
            <person name="Jiang Y."/>
            <person name="Tan M."/>
            <person name="Yang H."/>
            <person name="Li J."/>
            <person name="Wang M."/>
            <person name="Zheng Z."/>
            <person name="Li D."/>
            <person name="Howe N."/>
            <person name="Zhao Y."/>
            <person name="Standfuss J."/>
            <person name="Diederichs K."/>
            <person name="Dong Y."/>
            <person name="Potter C.S."/>
            <person name="Carragher B."/>
            <person name="Caffrey M."/>
            <person name="Jiang H."/>
            <person name="Chapman H.N."/>
            <person name="Spence J.C."/>
            <person name="Fromme P."/>
            <person name="Weierstall U."/>
            <person name="Ernst O.P."/>
            <person name="Katritch V."/>
            <person name="Gurevich V.V."/>
            <person name="Griffin P.R."/>
            <person name="Hubbell W.L."/>
            <person name="Stevens R.C."/>
            <person name="Cherezov V."/>
            <person name="Melcher K."/>
            <person name="Xu H.E."/>
        </authorList>
    </citation>
    <scope>INTERACTION WITH RHO</scope>
</reference>
<reference key="11">
    <citation type="journal article" date="2017" name="Cell">
        <title>Identification of Phosphorylation Codes for Arrestin Recruitment by G Protein-Coupled Receptors.</title>
        <authorList>
            <person name="Zhou X.E."/>
            <person name="He Y."/>
            <person name="de Waal P.W."/>
            <person name="Gao X."/>
            <person name="Kang Y."/>
            <person name="Van Eps N."/>
            <person name="Yin Y."/>
            <person name="Pal K."/>
            <person name="Goswami D."/>
            <person name="White T.A."/>
            <person name="Barty A."/>
            <person name="Latorraca N.R."/>
            <person name="Chapman H.N."/>
            <person name="Hubbell W.L."/>
            <person name="Dror R.O."/>
            <person name="Stevens R.C."/>
            <person name="Cherezov V."/>
            <person name="Gurevich V.V."/>
            <person name="Griffin P.R."/>
            <person name="Ernst O.P."/>
            <person name="Melcher K."/>
            <person name="Xu H.E."/>
        </authorList>
    </citation>
    <scope>INTERACTION WITH RHO</scope>
</reference>
<reference key="12">
    <citation type="journal article" date="1998" name="Hum. Mutat.">
        <title>Two Indian siblings with Oguchi disease are homozygous for an arrestin mutation encoding premature termination.</title>
        <authorList>
            <person name="Maw M."/>
            <person name="Kumaramanickavel G."/>
            <person name="Kar B."/>
            <person name="John S."/>
            <person name="Bridges R."/>
            <person name="Denton M."/>
        </authorList>
    </citation>
    <scope>VARIANT CSNBO1 193-ARG--GLU-405 DEL</scope>
</reference>
<reference key="13">
    <citation type="journal article" date="1998" name="Invest. Ophthalmol. Vis. Sci.">
        <title>Evaluation of the human arrestin gene in patients with retinitis pigmentosa and stationary night blindness.</title>
        <authorList>
            <person name="Sippel K.C."/>
            <person name="DeStefano J.D."/>
            <person name="Berson E.L."/>
            <person name="Dryja T.P."/>
        </authorList>
    </citation>
    <scope>VARIANTS VAL-76; CYS-84; MET-125; LEU-364; ILE-378 AND CYS-384</scope>
</reference>
<reference key="14">
    <citation type="journal article" date="2004" name="Ophthalmology">
        <title>Novel mutations in the arrestin gene and associated clinical features in Japanese patients with Oguchi's disease.</title>
        <authorList>
            <person name="Nakamura M."/>
            <person name="Yamamoto S."/>
            <person name="Okada M."/>
            <person name="Ito S."/>
            <person name="Tano Y."/>
            <person name="Miyake Y."/>
        </authorList>
    </citation>
    <scope>VARIANTS CSNBO1 175-ARG--GLU-405 DEL AND 292-ARG--GLU-405 DEL</scope>
</reference>
<reference key="15">
    <citation type="journal article" date="2012" name="Mol. Vis.">
        <title>A nonsense mutation in S-antigen (p.Glu306*) causes Oguchi disease.</title>
        <authorList>
            <person name="Waheed N.K."/>
            <person name="Qavi A.H."/>
            <person name="Malik S.N."/>
            <person name="Maria M."/>
            <person name="Riaz M."/>
            <person name="Cremers F.P."/>
            <person name="Azam M."/>
            <person name="Qamar R."/>
        </authorList>
    </citation>
    <scope>VARIANT CSNBO1 306-GLU--GLU-405 DEL</scope>
</reference>
<reference key="16">
    <citation type="journal article" date="2017" name="Invest. Ophthalmol. Vis. Sci.">
        <title>A Novel Dominant Mutation in SAG, the Arrestin-1 Gene, Is a Common Cause of Retinitis Pigmentosa in Hispanic Families in the Southwestern United States.</title>
        <authorList>
            <person name="Sullivan L.S."/>
            <person name="Bowne S.J."/>
            <person name="Koboldt D.C."/>
            <person name="Cadena E.L."/>
            <person name="Heckenlively J.R."/>
            <person name="Branham K.E."/>
            <person name="Wheaton D.H."/>
            <person name="Jones K.D."/>
            <person name="Ruiz R.S."/>
            <person name="Pennesi M.E."/>
            <person name="Yang P."/>
            <person name="Davis-Boozer D."/>
            <person name="Northrup H."/>
            <person name="Gurevich V.V."/>
            <person name="Chen R."/>
            <person name="Xu M."/>
            <person name="Li Y."/>
            <person name="Birch D.G."/>
            <person name="Daiger S.P."/>
        </authorList>
    </citation>
    <scope>VARIANT RP96 PHE-147</scope>
</reference>
<reference key="17">
    <citation type="journal article" date="2021" name="Ophthalmic Genet.">
        <title>Progressive sector retinitis pigmentosa due to c.440G&gt;T mutation in SAG in an Australian family.</title>
        <authorList>
            <person name="Pappalardo J."/>
            <person name="Heath Jeffery R.C."/>
            <person name="Thompson J.A."/>
            <person name="Charng J."/>
            <person name="Chelva E.S."/>
            <person name="Constable I.J."/>
            <person name="McLaren T.L."/>
            <person name="Lamey T.M."/>
            <person name="De Roach J.N."/>
            <person name="Chen F.K."/>
        </authorList>
    </citation>
    <scope>VARIANT RP96 PHE-147</scope>
</reference>
<gene>
    <name type="primary">SAG</name>
</gene>
<proteinExistence type="evidence at protein level"/>
<accession>P10523</accession>
<accession>A0FDN6</accession>
<accession>Q53SV3</accession>
<accession>Q99858</accession>
<name>ARRS_HUMAN</name>
<evidence type="ECO:0000250" key="1">
    <source>
        <dbReference type="UniProtKB" id="P08168"/>
    </source>
</evidence>
<evidence type="ECO:0000250" key="2">
    <source>
        <dbReference type="UniProtKB" id="P15887"/>
    </source>
</evidence>
<evidence type="ECO:0000250" key="3">
    <source>
        <dbReference type="UniProtKB" id="P20443"/>
    </source>
</evidence>
<evidence type="ECO:0000269" key="4">
    <source>
    </source>
</evidence>
<evidence type="ECO:0000269" key="5">
    <source>
    </source>
</evidence>
<evidence type="ECO:0000269" key="6">
    <source>
    </source>
</evidence>
<evidence type="ECO:0000269" key="7">
    <source>
    </source>
</evidence>
<evidence type="ECO:0000269" key="8">
    <source>
    </source>
</evidence>
<evidence type="ECO:0000269" key="9">
    <source>
    </source>
</evidence>
<evidence type="ECO:0000269" key="10">
    <source>
    </source>
</evidence>
<evidence type="ECO:0000269" key="11">
    <source>
    </source>
</evidence>
<evidence type="ECO:0000269" key="12">
    <source>
    </source>
</evidence>
<evidence type="ECO:0000269" key="13">
    <source>
    </source>
</evidence>
<evidence type="ECO:0000269" key="14">
    <source>
    </source>
</evidence>
<evidence type="ECO:0000269" key="15">
    <source>
    </source>
</evidence>
<evidence type="ECO:0000269" key="16">
    <source>
    </source>
</evidence>
<evidence type="ECO:0000269" key="17">
    <source>
    </source>
</evidence>
<evidence type="ECO:0000303" key="18">
    <source>
    </source>
</evidence>
<evidence type="ECO:0000305" key="19"/>
<evidence type="ECO:0000305" key="20">
    <source>
    </source>
</evidence>
<dbReference type="EMBL" id="X12453">
    <property type="protein sequence ID" value="CAA30984.1"/>
    <property type="molecule type" value="mRNA"/>
</dbReference>
<dbReference type="EMBL" id="U70976">
    <property type="protein sequence ID" value="AAC50992.1"/>
    <property type="molecule type" value="Genomic_DNA"/>
</dbReference>
<dbReference type="EMBL" id="U70962">
    <property type="protein sequence ID" value="AAC50992.1"/>
    <property type="status" value="JOINED"/>
    <property type="molecule type" value="Genomic_DNA"/>
</dbReference>
<dbReference type="EMBL" id="U70963">
    <property type="protein sequence ID" value="AAC50992.1"/>
    <property type="status" value="JOINED"/>
    <property type="molecule type" value="Genomic_DNA"/>
</dbReference>
<dbReference type="EMBL" id="U70964">
    <property type="protein sequence ID" value="AAC50992.1"/>
    <property type="status" value="JOINED"/>
    <property type="molecule type" value="Genomic_DNA"/>
</dbReference>
<dbReference type="EMBL" id="U70965">
    <property type="protein sequence ID" value="AAC50992.1"/>
    <property type="status" value="JOINED"/>
    <property type="molecule type" value="Genomic_DNA"/>
</dbReference>
<dbReference type="EMBL" id="U70966">
    <property type="protein sequence ID" value="AAC50992.1"/>
    <property type="status" value="JOINED"/>
    <property type="molecule type" value="Genomic_DNA"/>
</dbReference>
<dbReference type="EMBL" id="U70967">
    <property type="protein sequence ID" value="AAC50992.1"/>
    <property type="status" value="JOINED"/>
    <property type="molecule type" value="Genomic_DNA"/>
</dbReference>
<dbReference type="EMBL" id="U70968">
    <property type="protein sequence ID" value="AAC50992.1"/>
    <property type="status" value="JOINED"/>
    <property type="molecule type" value="Genomic_DNA"/>
</dbReference>
<dbReference type="EMBL" id="U70969">
    <property type="protein sequence ID" value="AAC50992.1"/>
    <property type="status" value="JOINED"/>
    <property type="molecule type" value="Genomic_DNA"/>
</dbReference>
<dbReference type="EMBL" id="U70970">
    <property type="protein sequence ID" value="AAC50992.1"/>
    <property type="status" value="JOINED"/>
    <property type="molecule type" value="Genomic_DNA"/>
</dbReference>
<dbReference type="EMBL" id="U70971">
    <property type="protein sequence ID" value="AAC50992.1"/>
    <property type="status" value="JOINED"/>
    <property type="molecule type" value="Genomic_DNA"/>
</dbReference>
<dbReference type="EMBL" id="U70972">
    <property type="protein sequence ID" value="AAC50992.1"/>
    <property type="status" value="JOINED"/>
    <property type="molecule type" value="Genomic_DNA"/>
</dbReference>
<dbReference type="EMBL" id="U70973">
    <property type="protein sequence ID" value="AAC50992.1"/>
    <property type="status" value="JOINED"/>
    <property type="molecule type" value="Genomic_DNA"/>
</dbReference>
<dbReference type="EMBL" id="U70974">
    <property type="protein sequence ID" value="AAC50992.1"/>
    <property type="status" value="JOINED"/>
    <property type="molecule type" value="Genomic_DNA"/>
</dbReference>
<dbReference type="EMBL" id="U70975">
    <property type="protein sequence ID" value="AAC50992.1"/>
    <property type="status" value="JOINED"/>
    <property type="molecule type" value="Genomic_DNA"/>
</dbReference>
<dbReference type="EMBL" id="AC013726">
    <property type="protein sequence ID" value="AAY14861.1"/>
    <property type="molecule type" value="Genomic_DNA"/>
</dbReference>
<dbReference type="EMBL" id="DQ980620">
    <property type="protein sequence ID" value="ABJ97141.1"/>
    <property type="molecule type" value="mRNA"/>
</dbReference>
<dbReference type="CCDS" id="CCDS46545.1"/>
<dbReference type="PIR" id="A30357">
    <property type="entry name" value="A30357"/>
</dbReference>
<dbReference type="RefSeq" id="NP_000532.2">
    <property type="nucleotide sequence ID" value="NM_000541.5"/>
</dbReference>
<dbReference type="SMR" id="P10523"/>
<dbReference type="BioGRID" id="112202">
    <property type="interactions" value="23"/>
</dbReference>
<dbReference type="FunCoup" id="P10523">
    <property type="interactions" value="65"/>
</dbReference>
<dbReference type="IntAct" id="P10523">
    <property type="interactions" value="3"/>
</dbReference>
<dbReference type="STRING" id="9606.ENSP00000386444"/>
<dbReference type="iPTMnet" id="P10523"/>
<dbReference type="PhosphoSitePlus" id="P10523"/>
<dbReference type="BioMuta" id="SAG"/>
<dbReference type="DMDM" id="109940055"/>
<dbReference type="jPOST" id="P10523"/>
<dbReference type="MassIVE" id="P10523"/>
<dbReference type="PaxDb" id="9606-ENSP00000386444"/>
<dbReference type="PeptideAtlas" id="P10523"/>
<dbReference type="ProteomicsDB" id="52611"/>
<dbReference type="Antibodypedia" id="11899">
    <property type="antibodies" value="266 antibodies from 23 providers"/>
</dbReference>
<dbReference type="DNASU" id="6295"/>
<dbReference type="Ensembl" id="ENST00000409110.6">
    <property type="protein sequence ID" value="ENSP00000386444.1"/>
    <property type="gene ID" value="ENSG00000130561.17"/>
</dbReference>
<dbReference type="Ensembl" id="ENST00000631149.3">
    <property type="protein sequence ID" value="ENSP00000486571.1"/>
    <property type="gene ID" value="ENSG00000281857.3"/>
</dbReference>
<dbReference type="GeneID" id="6295"/>
<dbReference type="KEGG" id="hsa:6295"/>
<dbReference type="MANE-Select" id="ENST00000409110.6">
    <property type="protein sequence ID" value="ENSP00000386444.1"/>
    <property type="RefSeq nucleotide sequence ID" value="NM_000541.5"/>
    <property type="RefSeq protein sequence ID" value="NP_000532.2"/>
</dbReference>
<dbReference type="UCSC" id="uc002vuh.3">
    <property type="organism name" value="human"/>
</dbReference>
<dbReference type="AGR" id="HGNC:10521"/>
<dbReference type="CTD" id="6295"/>
<dbReference type="DisGeNET" id="6295"/>
<dbReference type="GeneCards" id="SAG"/>
<dbReference type="GeneReviews" id="SAG"/>
<dbReference type="HGNC" id="HGNC:10521">
    <property type="gene designation" value="SAG"/>
</dbReference>
<dbReference type="HPA" id="ENSG00000130561">
    <property type="expression patterns" value="Tissue enriched (retina)"/>
</dbReference>
<dbReference type="MalaCards" id="SAG"/>
<dbReference type="MIM" id="181031">
    <property type="type" value="gene"/>
</dbReference>
<dbReference type="MIM" id="258100">
    <property type="type" value="phenotype"/>
</dbReference>
<dbReference type="MIM" id="613758">
    <property type="type" value="phenotype"/>
</dbReference>
<dbReference type="MIM" id="620228">
    <property type="type" value="phenotype"/>
</dbReference>
<dbReference type="neXtProt" id="NX_P10523"/>
<dbReference type="OpenTargets" id="ENSG00000130561"/>
<dbReference type="Orphanet" id="215">
    <property type="disease" value="Congenital stationary night blindness"/>
</dbReference>
<dbReference type="Orphanet" id="75382">
    <property type="disease" value="Oguchi disease"/>
</dbReference>
<dbReference type="Orphanet" id="791">
    <property type="disease" value="Retinitis pigmentosa"/>
</dbReference>
<dbReference type="PharmGKB" id="PA34929"/>
<dbReference type="VEuPathDB" id="HostDB:ENSG00000130561"/>
<dbReference type="eggNOG" id="KOG3865">
    <property type="taxonomic scope" value="Eukaryota"/>
</dbReference>
<dbReference type="GeneTree" id="ENSGT00950000182887"/>
<dbReference type="HOGENOM" id="CLU_033484_1_1_1"/>
<dbReference type="InParanoid" id="P10523"/>
<dbReference type="OMA" id="QPAPQDM"/>
<dbReference type="OrthoDB" id="298939at2759"/>
<dbReference type="PAN-GO" id="P10523">
    <property type="GO annotations" value="4 GO annotations based on evolutionary models"/>
</dbReference>
<dbReference type="PhylomeDB" id="P10523"/>
<dbReference type="TreeFam" id="TF314260"/>
<dbReference type="PathwayCommons" id="P10523"/>
<dbReference type="Reactome" id="R-HSA-2485179">
    <property type="pathway name" value="Activation of the phototransduction cascade"/>
</dbReference>
<dbReference type="Reactome" id="R-HSA-2514859">
    <property type="pathway name" value="Inactivation, recovery and regulation of the phototransduction cascade"/>
</dbReference>
<dbReference type="SignaLink" id="P10523"/>
<dbReference type="SIGNOR" id="P10523"/>
<dbReference type="BioGRID-ORCS" id="6295">
    <property type="hits" value="8 hits in 1138 CRISPR screens"/>
</dbReference>
<dbReference type="ChiTaRS" id="SAG">
    <property type="organism name" value="human"/>
</dbReference>
<dbReference type="GeneWiki" id="SAG_(gene)"/>
<dbReference type="GenomeRNAi" id="6295"/>
<dbReference type="Pharos" id="P10523">
    <property type="development level" value="Tbio"/>
</dbReference>
<dbReference type="PRO" id="PR:P10523"/>
<dbReference type="Proteomes" id="UP000005640">
    <property type="component" value="Chromosome 2"/>
</dbReference>
<dbReference type="RNAct" id="P10523">
    <property type="molecule type" value="protein"/>
</dbReference>
<dbReference type="Bgee" id="ENSG00000130561">
    <property type="expression patterns" value="Expressed in nucleus accumbens and 78 other cell types or tissues"/>
</dbReference>
<dbReference type="ExpressionAtlas" id="P10523">
    <property type="expression patterns" value="baseline and differential"/>
</dbReference>
<dbReference type="GO" id="GO:0005829">
    <property type="term" value="C:cytosol"/>
    <property type="evidence" value="ECO:0000304"/>
    <property type="project" value="Reactome"/>
</dbReference>
<dbReference type="GO" id="GO:0016020">
    <property type="term" value="C:membrane"/>
    <property type="evidence" value="ECO:0007669"/>
    <property type="project" value="UniProtKB-SubCell"/>
</dbReference>
<dbReference type="GO" id="GO:0001917">
    <property type="term" value="C:photoreceptor inner segment"/>
    <property type="evidence" value="ECO:0000318"/>
    <property type="project" value="GO_Central"/>
</dbReference>
<dbReference type="GO" id="GO:0001750">
    <property type="term" value="C:photoreceptor outer segment"/>
    <property type="evidence" value="ECO:0000314"/>
    <property type="project" value="UniProtKB"/>
</dbReference>
<dbReference type="GO" id="GO:0001664">
    <property type="term" value="F:G protein-coupled receptor binding"/>
    <property type="evidence" value="ECO:0000318"/>
    <property type="project" value="GO_Central"/>
</dbReference>
<dbReference type="GO" id="GO:0002046">
    <property type="term" value="F:opsin binding"/>
    <property type="evidence" value="ECO:0007669"/>
    <property type="project" value="Ensembl"/>
</dbReference>
<dbReference type="GO" id="GO:0051219">
    <property type="term" value="F:phosphoprotein binding"/>
    <property type="evidence" value="ECO:0007669"/>
    <property type="project" value="Ensembl"/>
</dbReference>
<dbReference type="GO" id="GO:0004864">
    <property type="term" value="F:protein phosphatase inhibitor activity"/>
    <property type="evidence" value="ECO:0000304"/>
    <property type="project" value="ProtInc"/>
</dbReference>
<dbReference type="GO" id="GO:0030507">
    <property type="term" value="F:spectrin binding"/>
    <property type="evidence" value="ECO:0007669"/>
    <property type="project" value="Ensembl"/>
</dbReference>
<dbReference type="GO" id="GO:0007166">
    <property type="term" value="P:cell surface receptor signaling pathway"/>
    <property type="evidence" value="ECO:0000304"/>
    <property type="project" value="ProtInc"/>
</dbReference>
<dbReference type="GO" id="GO:0016056">
    <property type="term" value="P:G protein-coupled opsin signaling pathway"/>
    <property type="evidence" value="ECO:0000304"/>
    <property type="project" value="ProtInc"/>
</dbReference>
<dbReference type="GO" id="GO:0002031">
    <property type="term" value="P:G protein-coupled receptor internalization"/>
    <property type="evidence" value="ECO:0000318"/>
    <property type="project" value="GO_Central"/>
</dbReference>
<dbReference type="FunFam" id="2.60.40.840:FF:000002">
    <property type="entry name" value="Arrestin 3"/>
    <property type="match status" value="1"/>
</dbReference>
<dbReference type="FunFam" id="2.60.40.640:FF:000011">
    <property type="entry name" value="S-arrestin isoform X2"/>
    <property type="match status" value="1"/>
</dbReference>
<dbReference type="Gene3D" id="2.60.40.640">
    <property type="match status" value="1"/>
</dbReference>
<dbReference type="Gene3D" id="2.60.40.840">
    <property type="match status" value="1"/>
</dbReference>
<dbReference type="InterPro" id="IPR000698">
    <property type="entry name" value="Arrestin"/>
</dbReference>
<dbReference type="InterPro" id="IPR014752">
    <property type="entry name" value="Arrestin-like_C"/>
</dbReference>
<dbReference type="InterPro" id="IPR011021">
    <property type="entry name" value="Arrestin-like_N"/>
</dbReference>
<dbReference type="InterPro" id="IPR011022">
    <property type="entry name" value="Arrestin_C-like"/>
</dbReference>
<dbReference type="InterPro" id="IPR017864">
    <property type="entry name" value="Arrestin_CS"/>
</dbReference>
<dbReference type="InterPro" id="IPR014753">
    <property type="entry name" value="Arrestin_N"/>
</dbReference>
<dbReference type="InterPro" id="IPR014756">
    <property type="entry name" value="Ig_E-set"/>
</dbReference>
<dbReference type="PANTHER" id="PTHR11792">
    <property type="entry name" value="ARRESTIN"/>
    <property type="match status" value="1"/>
</dbReference>
<dbReference type="PANTHER" id="PTHR11792:SF15">
    <property type="entry name" value="S-ARRESTIN"/>
    <property type="match status" value="1"/>
</dbReference>
<dbReference type="Pfam" id="PF02752">
    <property type="entry name" value="Arrestin_C"/>
    <property type="match status" value="1"/>
</dbReference>
<dbReference type="Pfam" id="PF00339">
    <property type="entry name" value="Arrestin_N"/>
    <property type="match status" value="1"/>
</dbReference>
<dbReference type="PRINTS" id="PR00309">
    <property type="entry name" value="ARRESTIN"/>
</dbReference>
<dbReference type="SMART" id="SM01017">
    <property type="entry name" value="Arrestin_C"/>
    <property type="match status" value="1"/>
</dbReference>
<dbReference type="SUPFAM" id="SSF81296">
    <property type="entry name" value="E set domains"/>
    <property type="match status" value="2"/>
</dbReference>
<dbReference type="PROSITE" id="PS00295">
    <property type="entry name" value="ARRESTINS"/>
    <property type="match status" value="1"/>
</dbReference>
<sequence>MAASGKTSKSEPNHVIFKKISRDKSVTIYLGNRDYIDHVSQVQPVDGVVLVDPDLVKGKKVYVTLTCAFRYGQEDIDVIGLTFRRDLYFSRVQVYPPVGAASTPTKLQESLLKKLGSNTYPFLLTFPDYLPCSVMLQPAPQDSGKSCGVDFEVKAFATDSTDAEEDKIPKKSSVRLLIRKVQHAPLEMGPQPRAEAAWQFFMSDKPLHLAVSLNKEIYFHGEPIPVTVTVTNNTEKTVKKIKAFVEQVANVVLYSSDYYVKPVAMEEAQEKVPPNSTLTKTLTLLPLLANNRERRGIALDGKIKHEDTNLASSTIIKEGIDRTVLGILVSYQIKVKLTVSGFLGELTSSEVATEVPFRLMHPQPEDPAKESYQDANLVFEEFARHNLKDAGEAEEGKRDKNDVDE</sequence>
<feature type="chain" id="PRO_0000205186" description="S-arrestin">
    <location>
        <begin position="1"/>
        <end position="405"/>
    </location>
</feature>
<feature type="modified residue" description="Phosphothreonine" evidence="2">
    <location>
        <position position="234"/>
    </location>
</feature>
<feature type="sequence variant" id="VAR_008263" description="In dbSNP:rs7565275." evidence="13 16">
    <original>I</original>
    <variation>V</variation>
    <location>
        <position position="76"/>
    </location>
</feature>
<feature type="sequence variant" id="VAR_008264" description="In dbSNP:rs115857633." evidence="16">
    <original>R</original>
    <variation>C</variation>
    <location>
        <position position="84"/>
    </location>
</feature>
<feature type="sequence variant" id="VAR_008265" description="In dbSNP:rs137886124." evidence="16">
    <original>T</original>
    <variation>M</variation>
    <location>
        <position position="125"/>
    </location>
</feature>
<feature type="sequence variant" id="VAR_088068" description="In RP96." evidence="8 11">
    <original>C</original>
    <variation>F</variation>
    <location>
        <position position="147"/>
    </location>
</feature>
<feature type="sequence variant" id="VAR_088069" description="In CSNBO1." evidence="4">
    <location>
        <begin position="175"/>
        <end position="405"/>
    </location>
</feature>
<feature type="sequence variant" id="VAR_088070" description="In CSNBO1." evidence="15">
    <location>
        <begin position="193"/>
        <end position="405"/>
    </location>
</feature>
<feature type="sequence variant" id="VAR_088071" description="In CSNBO1." evidence="4">
    <location>
        <begin position="292"/>
        <end position="405"/>
    </location>
</feature>
<feature type="sequence variant" id="VAR_088072" description="In CSNBO1." evidence="6">
    <location>
        <begin position="306"/>
        <end position="405"/>
    </location>
</feature>
<feature type="sequence variant" id="VAR_008266" description="In dbSNP:rs112613526." evidence="16">
    <original>P</original>
    <variation>L</variation>
    <location>
        <position position="364"/>
    </location>
</feature>
<feature type="sequence variant" id="VAR_008267" description="In dbSNP:rs200602069." evidence="16">
    <original>V</original>
    <variation>I</variation>
    <location>
        <position position="378"/>
    </location>
</feature>
<feature type="sequence variant" id="VAR_008268" description="In dbSNP:rs1427707173." evidence="16">
    <original>R</original>
    <variation>C</variation>
    <location>
        <position position="384"/>
    </location>
</feature>
<feature type="sequence variant" id="VAR_048333" description="In dbSNP:rs1046976." evidence="10 14">
    <original>V</original>
    <variation>A</variation>
    <location>
        <position position="403"/>
    </location>
</feature>
<feature type="sequence variant" id="VAR_033524" description="In dbSNP:rs1046974.">
    <original>V</original>
    <variation>I</variation>
    <location>
        <position position="403"/>
    </location>
</feature>
<feature type="sequence conflict" description="In Ref. 1; CAA30984." evidence="19" ref="1">
    <original>L</original>
    <variation>Y</variation>
    <location>
        <position position="176"/>
    </location>
</feature>
<feature type="sequence conflict" description="In Ref. 1; CAA30984." evidence="19" ref="1">
    <original>K</original>
    <variation>S</variation>
    <location>
        <position position="180"/>
    </location>
</feature>
<feature type="sequence conflict" description="In Ref. 1; CAA30984." evidence="19" ref="1">
    <original>A</original>
    <variation>T</variation>
    <location>
        <position position="197"/>
    </location>
</feature>
<feature type="sequence conflict" description="In Ref. 1; CAA30984." evidence="19" ref="1">
    <original>K</original>
    <variation>R</variation>
    <location>
        <position position="215"/>
    </location>
</feature>
<feature type="sequence conflict" description="In Ref. 1; CAA30984." evidence="19" ref="1">
    <original>F</original>
    <variation>C</variation>
    <location>
        <position position="244"/>
    </location>
</feature>
<feature type="sequence conflict" description="In Ref. 1; CAA30984." evidence="19" ref="1">
    <original>Y</original>
    <variation>I</variation>
    <location>
        <position position="372"/>
    </location>
</feature>
<comment type="function">
    <text evidence="1 20">Binds to photoactivated, phosphorylated RHO and terminates RHO signaling via G-proteins by competing with G-proteins for the same binding site on RHO (By similarity). May play a role in preventing light-dependent degeneration of retinal photoreceptor cells (PubMed:9565049).</text>
</comment>
<comment type="subunit">
    <text evidence="5 7 9">Monomer. Homodimer. Homotetramer (PubMed:21288033). Interacts with RHO (via the phosphorylated C-terminus) (PubMed:26200343, PubMed:28753425).</text>
</comment>
<comment type="interaction">
    <interactant intactId="EBI-1642180">
        <id>P10523</id>
    </interactant>
    <interactant intactId="EBI-745579">
        <id>P49761</id>
        <label>CLK3</label>
    </interactant>
    <organismsDiffer>false</organismsDiffer>
    <experiments>3</experiments>
</comment>
<comment type="subcellular location">
    <subcellularLocation>
        <location evidence="12">Cell projection</location>
        <location evidence="12">Cilium</location>
        <location evidence="12">Photoreceptor outer segment</location>
    </subcellularLocation>
    <subcellularLocation>
        <location evidence="3">Membrane</location>
        <topology evidence="3">Peripheral membrane protein</topology>
    </subcellularLocation>
    <text evidence="1 12">Highly expressed in photoreceptor outer segments in light-exposed retina. Evenly distributed throughout rod photoreceptor cells in dark-adapted retina (By similarity). Predominantly dectected at the proximal region of photoreceptor outer segments, near disk membranes (PubMed:3720866).</text>
</comment>
<comment type="tissue specificity">
    <text evidence="12">Detected in retina, in the proximal portion of the outer segment of rod photoreceptor cells (at protein level).</text>
</comment>
<comment type="domain">
    <text evidence="1">The C-terminus interferes with binding to non-phosphorylated RHO. Interaction with phosphorylated RHO triggers displacement of the C-terminus and leads to a conformation change that mediates high-affinity RHO binding.</text>
</comment>
<comment type="disease" evidence="4 6 13 15">
    <disease id="DI-00374">
        <name>Night blindness, congenital stationary, Oguchi type 1</name>
        <acronym>CSNBO1</acronym>
        <description>A non-progressive retinal disorder characterized by impaired night vision, often associated with nystagmus and myopia. Congenital stationary night blindness Oguchi type is an autosomal recessive form associated with fundus discoloration and abnormally slow dark adaptation.</description>
        <dbReference type="MIM" id="258100"/>
    </disease>
    <text>The disease is caused by variants affecting the gene represented in this entry.</text>
</comment>
<comment type="disease" evidence="17">
    <disease id="DI-03034">
        <name>Retinitis pigmentosa 47</name>
        <acronym>RP47</acronym>
        <description>A retinal dystrophy belonging to the group of pigmentary retinopathies. Retinitis pigmentosa is characterized by retinal pigment deposits visible on fundus examination and primary loss of rod photoreceptor cells followed by secondary loss of cone photoreceptors. Patients typically have night vision blindness and loss of midperipheral visual field. As their condition progresses, they lose their far peripheral visual field and eventually central vision as well.</description>
        <dbReference type="MIM" id="613758"/>
    </disease>
    <text>The disease is caused by variants affecting the gene represented in this entry.</text>
</comment>
<comment type="disease" evidence="8 11">
    <disease id="DI-06581">
        <name>Retinitis pigmentosa 96</name>
        <acronym>RP96</acronym>
        <description>An autosomal dominant form of retinitis pigmentosa, a retinal dystrophy belonging to the group of pigmentary retinopathies. Retinitis pigmentosa is characterized by retinal pigment deposits visible on fundus examination and primary loss of rod photoreceptor cells followed by secondary loss of cone photoreceptors. Patients typically have night vision blindness and loss of midperipheral visual field.</description>
        <dbReference type="MIM" id="620228"/>
    </disease>
    <text>The disease is caused by variants affecting the gene represented in this entry.</text>
</comment>
<comment type="similarity">
    <text evidence="19">Belongs to the arrestin family.</text>
</comment>
<organism>
    <name type="scientific">Homo sapiens</name>
    <name type="common">Human</name>
    <dbReference type="NCBI Taxonomy" id="9606"/>
    <lineage>
        <taxon>Eukaryota</taxon>
        <taxon>Metazoa</taxon>
        <taxon>Chordata</taxon>
        <taxon>Craniata</taxon>
        <taxon>Vertebrata</taxon>
        <taxon>Euteleostomi</taxon>
        <taxon>Mammalia</taxon>
        <taxon>Eutheria</taxon>
        <taxon>Euarchontoglires</taxon>
        <taxon>Primates</taxon>
        <taxon>Haplorrhini</taxon>
        <taxon>Catarrhini</taxon>
        <taxon>Hominidae</taxon>
        <taxon>Homo</taxon>
    </lineage>
</organism>